<accession>P0CA31</accession>
<keyword id="KW-0426">Late protein</keyword>
<keyword id="KW-0946">Virion</keyword>
<dbReference type="EMBL" id="AY261363">
    <property type="status" value="NOT_ANNOTATED_CDS"/>
    <property type="molecule type" value="Genomic_DNA"/>
</dbReference>
<dbReference type="Proteomes" id="UP000000859">
    <property type="component" value="Segment"/>
</dbReference>
<dbReference type="GO" id="GO:0044423">
    <property type="term" value="C:virion component"/>
    <property type="evidence" value="ECO:0007669"/>
    <property type="project" value="UniProtKB-KW"/>
</dbReference>
<evidence type="ECO:0000250" key="1">
    <source>
        <dbReference type="UniProtKB" id="Q65186"/>
    </source>
</evidence>
<evidence type="ECO:0000305" key="2"/>
<gene>
    <name type="ordered locus">Pret-127</name>
</gene>
<organismHost>
    <name type="scientific">Ornithodoros</name>
    <name type="common">relapsing fever ticks</name>
    <dbReference type="NCBI Taxonomy" id="6937"/>
</organismHost>
<organismHost>
    <name type="scientific">Phacochoerus aethiopicus</name>
    <name type="common">Warthog</name>
    <dbReference type="NCBI Taxonomy" id="85517"/>
</organismHost>
<organismHost>
    <name type="scientific">Phacochoerus africanus</name>
    <name type="common">Warthog</name>
    <dbReference type="NCBI Taxonomy" id="41426"/>
</organismHost>
<organismHost>
    <name type="scientific">Potamochoerus larvatus</name>
    <name type="common">Bushpig</name>
    <dbReference type="NCBI Taxonomy" id="273792"/>
</organismHost>
<organismHost>
    <name type="scientific">Sus scrofa</name>
    <name type="common">Pig</name>
    <dbReference type="NCBI Taxonomy" id="9823"/>
</organismHost>
<protein>
    <recommendedName>
        <fullName>Uncharacterized protein H124R</fullName>
        <shortName>pH124R</shortName>
    </recommendedName>
</protein>
<name>VF124_ASFP4</name>
<organism>
    <name type="scientific">African swine fever virus (isolate Tick/South Africa/Pretoriuskop Pr4/1996)</name>
    <name type="common">ASFV</name>
    <dbReference type="NCBI Taxonomy" id="561443"/>
    <lineage>
        <taxon>Viruses</taxon>
        <taxon>Varidnaviria</taxon>
        <taxon>Bamfordvirae</taxon>
        <taxon>Nucleocytoviricota</taxon>
        <taxon>Pokkesviricetes</taxon>
        <taxon>Asfuvirales</taxon>
        <taxon>Asfarviridae</taxon>
        <taxon>Asfivirus</taxon>
        <taxon>African swine fever virus</taxon>
    </lineage>
</organism>
<comment type="subcellular location">
    <subcellularLocation>
        <location evidence="1">Virion</location>
    </subcellularLocation>
</comment>
<comment type="induction">
    <text evidence="2">Expressed in the late phase of the viral replicative cycle.</text>
</comment>
<comment type="similarity">
    <text evidence="2">Belongs to the asfivirus H124R family.</text>
</comment>
<reference key="1">
    <citation type="submission" date="2003-03" db="EMBL/GenBank/DDBJ databases">
        <title>African swine fever virus genomes.</title>
        <authorList>
            <person name="Kutish G.F."/>
            <person name="Rock D.L."/>
        </authorList>
    </citation>
    <scope>NUCLEOTIDE SEQUENCE [GENOMIC DNA]</scope>
</reference>
<sequence>MNLEYVQVVQKFNQVLLELTKKVCTVVGGSKPTYWYHHIRRVCSECPSMPMSMIGPYLNVYKSQILTKDKNFFMNFDPAHNEYTFIIQKLKEAARNMPEDELEQYWVKLLFLLKSYIKCKPFIN</sequence>
<proteinExistence type="inferred from homology"/>
<feature type="chain" id="PRO_0000373498" description="Uncharacterized protein H124R">
    <location>
        <begin position="1"/>
        <end position="124"/>
    </location>
</feature>